<protein>
    <recommendedName>
        <fullName evidence="1">Putative [LysW]-aminoadipate semialdehyde/glutamate semialdehyde transaminase</fullName>
        <ecNumber evidence="1">2.6.1.118</ecNumber>
        <ecNumber evidence="1">2.6.1.124</ecNumber>
    </recommendedName>
</protein>
<gene>
    <name evidence="1" type="primary">lysJ</name>
    <name type="ordered locus">PH1716</name>
</gene>
<feature type="chain" id="PRO_0000112828" description="Putative [LysW]-aminoadipate semialdehyde/glutamate semialdehyde transaminase">
    <location>
        <begin position="1"/>
        <end position="366"/>
    </location>
</feature>
<feature type="binding site" evidence="1">
    <location>
        <begin position="90"/>
        <end position="91"/>
    </location>
    <ligand>
        <name>pyridoxal 5'-phosphate</name>
        <dbReference type="ChEBI" id="CHEBI:597326"/>
    </ligand>
</feature>
<feature type="binding site" evidence="1">
    <location>
        <position position="117"/>
    </location>
    <ligand>
        <name>pyridoxal 5'-phosphate</name>
        <dbReference type="ChEBI" id="CHEBI:597326"/>
    </ligand>
</feature>
<feature type="binding site" evidence="1">
    <location>
        <position position="120"/>
    </location>
    <ligand>
        <name>substrate</name>
    </ligand>
</feature>
<feature type="binding site" evidence="1">
    <location>
        <begin position="202"/>
        <end position="205"/>
    </location>
    <ligand>
        <name>pyridoxal 5'-phosphate</name>
        <dbReference type="ChEBI" id="CHEBI:597326"/>
    </ligand>
</feature>
<feature type="binding site" evidence="1">
    <location>
        <position position="254"/>
    </location>
    <ligand>
        <name>substrate</name>
    </ligand>
</feature>
<feature type="binding site" evidence="1">
    <location>
        <position position="255"/>
    </location>
    <ligand>
        <name>pyridoxal 5'-phosphate</name>
        <dbReference type="ChEBI" id="CHEBI:597326"/>
    </ligand>
</feature>
<feature type="modified residue" description="N6-(pyridoxal phosphate)lysine" evidence="1">
    <location>
        <position position="230"/>
    </location>
</feature>
<proteinExistence type="inferred from homology"/>
<reference key="1">
    <citation type="journal article" date="1998" name="DNA Res.">
        <title>Complete sequence and gene organization of the genome of a hyper-thermophilic archaebacterium, Pyrococcus horikoshii OT3.</title>
        <authorList>
            <person name="Kawarabayasi Y."/>
            <person name="Sawada M."/>
            <person name="Horikawa H."/>
            <person name="Haikawa Y."/>
            <person name="Hino Y."/>
            <person name="Yamamoto S."/>
            <person name="Sekine M."/>
            <person name="Baba S."/>
            <person name="Kosugi H."/>
            <person name="Hosoyama A."/>
            <person name="Nagai Y."/>
            <person name="Sakai M."/>
            <person name="Ogura K."/>
            <person name="Otsuka R."/>
            <person name="Nakazawa H."/>
            <person name="Takamiya M."/>
            <person name="Ohfuku Y."/>
            <person name="Funahashi T."/>
            <person name="Tanaka T."/>
            <person name="Kudoh Y."/>
            <person name="Yamazaki J."/>
            <person name="Kushida N."/>
            <person name="Oguchi A."/>
            <person name="Aoki K."/>
            <person name="Yoshizawa T."/>
            <person name="Nakamura Y."/>
            <person name="Robb F.T."/>
            <person name="Horikoshi K."/>
            <person name="Masuchi Y."/>
            <person name="Shizuya H."/>
            <person name="Kikuchi H."/>
        </authorList>
    </citation>
    <scope>NUCLEOTIDE SEQUENCE [LARGE SCALE GENOMIC DNA]</scope>
    <source>
        <strain>ATCC 700860 / DSM 12428 / JCM 9974 / NBRC 100139 / OT-3</strain>
    </source>
</reference>
<comment type="function">
    <text evidence="1">Involved in both the arginine and lysine biosynthetic pathways.</text>
</comment>
<comment type="catalytic activity">
    <reaction evidence="1">
        <text>[amino-group carrier protein]-C-terminal-gamma-(L-lysyl)-L-glutamate + 2-oxoglutarate = [amino-group carrier protein]-C-terminal-N-(1-carboxy-5-oxopentan-1-yl)-L-glutamine + L-glutamate</text>
        <dbReference type="Rhea" id="RHEA:41952"/>
        <dbReference type="Rhea" id="RHEA-COMP:9714"/>
        <dbReference type="Rhea" id="RHEA-COMP:9715"/>
        <dbReference type="ChEBI" id="CHEBI:16810"/>
        <dbReference type="ChEBI" id="CHEBI:29985"/>
        <dbReference type="ChEBI" id="CHEBI:78501"/>
        <dbReference type="ChEBI" id="CHEBI:78526"/>
        <dbReference type="EC" id="2.6.1.118"/>
    </reaction>
</comment>
<comment type="catalytic activity">
    <reaction evidence="1">
        <text>[amino-group carrier protein]-C-terminal-gamma-(L-ornithyl)-L-glutamate + 2-oxoglutarate = [amino-group carrier protein]-C-terminal-gamma-(L-glutamyl-5-semialdehyde)-L-glutamate + L-glutamate</text>
        <dbReference type="Rhea" id="RHEA:52672"/>
        <dbReference type="Rhea" id="RHEA-COMP:13327"/>
        <dbReference type="Rhea" id="RHEA-COMP:13328"/>
        <dbReference type="ChEBI" id="CHEBI:16810"/>
        <dbReference type="ChEBI" id="CHEBI:29985"/>
        <dbReference type="ChEBI" id="CHEBI:136761"/>
        <dbReference type="ChEBI" id="CHEBI:136763"/>
        <dbReference type="EC" id="2.6.1.124"/>
    </reaction>
</comment>
<comment type="cofactor">
    <cofactor evidence="1">
        <name>pyridoxal 5'-phosphate</name>
        <dbReference type="ChEBI" id="CHEBI:597326"/>
    </cofactor>
    <text evidence="1">Binds 1 pyridoxal phosphate per subunit.</text>
</comment>
<comment type="pathway">
    <text evidence="1">Amino-acid biosynthesis; L-lysine biosynthesis via AAA pathway; L-lysine from L-alpha-aminoadipate (Thermus route): step 4/5.</text>
</comment>
<comment type="pathway">
    <text evidence="1">Amino-acid biosynthesis; L-arginine biosynthesis.</text>
</comment>
<comment type="subunit">
    <text evidence="1">Homodimer.</text>
</comment>
<comment type="subcellular location">
    <subcellularLocation>
        <location evidence="1">Cytoplasm</location>
    </subcellularLocation>
</comment>
<comment type="similarity">
    <text evidence="1">Belongs to the class-III pyridoxal-phosphate-dependent aminotransferase family. LysJ subfamily.</text>
</comment>
<dbReference type="EC" id="2.6.1.118" evidence="1"/>
<dbReference type="EC" id="2.6.1.124" evidence="1"/>
<dbReference type="EMBL" id="BA000001">
    <property type="protein sequence ID" value="BAA30830.1"/>
    <property type="molecule type" value="Genomic_DNA"/>
</dbReference>
<dbReference type="PIR" id="G71179">
    <property type="entry name" value="G71179"/>
</dbReference>
<dbReference type="RefSeq" id="WP_010885782.1">
    <property type="nucleotide sequence ID" value="NC_000961.1"/>
</dbReference>
<dbReference type="SMR" id="O59401"/>
<dbReference type="STRING" id="70601.gene:9378712"/>
<dbReference type="EnsemblBacteria" id="BAA30830">
    <property type="protein sequence ID" value="BAA30830"/>
    <property type="gene ID" value="BAA30830"/>
</dbReference>
<dbReference type="GeneID" id="1442563"/>
<dbReference type="KEGG" id="pho:PH1716"/>
<dbReference type="eggNOG" id="arCOG00914">
    <property type="taxonomic scope" value="Archaea"/>
</dbReference>
<dbReference type="OrthoDB" id="85346at2157"/>
<dbReference type="UniPathway" id="UPA00033">
    <property type="reaction ID" value="UER00038"/>
</dbReference>
<dbReference type="UniPathway" id="UPA00068"/>
<dbReference type="Proteomes" id="UP000000752">
    <property type="component" value="Chromosome"/>
</dbReference>
<dbReference type="GO" id="GO:0005737">
    <property type="term" value="C:cytoplasm"/>
    <property type="evidence" value="ECO:0007669"/>
    <property type="project" value="UniProtKB-SubCell"/>
</dbReference>
<dbReference type="GO" id="GO:0042802">
    <property type="term" value="F:identical protein binding"/>
    <property type="evidence" value="ECO:0007669"/>
    <property type="project" value="TreeGrafter"/>
</dbReference>
<dbReference type="GO" id="GO:0030170">
    <property type="term" value="F:pyridoxal phosphate binding"/>
    <property type="evidence" value="ECO:0007669"/>
    <property type="project" value="InterPro"/>
</dbReference>
<dbReference type="GO" id="GO:0008483">
    <property type="term" value="F:transaminase activity"/>
    <property type="evidence" value="ECO:0007669"/>
    <property type="project" value="UniProtKB-UniRule"/>
</dbReference>
<dbReference type="GO" id="GO:0042450">
    <property type="term" value="P:arginine biosynthetic process via ornithine"/>
    <property type="evidence" value="ECO:0007669"/>
    <property type="project" value="UniProtKB-UniRule"/>
</dbReference>
<dbReference type="GO" id="GO:0006526">
    <property type="term" value="P:L-arginine biosynthetic process"/>
    <property type="evidence" value="ECO:0007669"/>
    <property type="project" value="UniProtKB-UniPathway"/>
</dbReference>
<dbReference type="GO" id="GO:0019878">
    <property type="term" value="P:lysine biosynthetic process via aminoadipic acid"/>
    <property type="evidence" value="ECO:0007669"/>
    <property type="project" value="UniProtKB-UniRule"/>
</dbReference>
<dbReference type="CDD" id="cd00610">
    <property type="entry name" value="OAT_like"/>
    <property type="match status" value="1"/>
</dbReference>
<dbReference type="FunFam" id="3.40.640.10:FF:000004">
    <property type="entry name" value="Acetylornithine aminotransferase"/>
    <property type="match status" value="1"/>
</dbReference>
<dbReference type="Gene3D" id="3.90.1150.10">
    <property type="entry name" value="Aspartate Aminotransferase, domain 1"/>
    <property type="match status" value="1"/>
</dbReference>
<dbReference type="Gene3D" id="3.40.640.10">
    <property type="entry name" value="Type I PLP-dependent aspartate aminotransferase-like (Major domain)"/>
    <property type="match status" value="1"/>
</dbReference>
<dbReference type="HAMAP" id="MF_02084">
    <property type="entry name" value="LysJ_aminotrans_3"/>
    <property type="match status" value="1"/>
</dbReference>
<dbReference type="InterPro" id="IPR004636">
    <property type="entry name" value="AcOrn/SuccOrn_fam"/>
</dbReference>
<dbReference type="InterPro" id="IPR005814">
    <property type="entry name" value="Aminotrans_3"/>
</dbReference>
<dbReference type="InterPro" id="IPR049704">
    <property type="entry name" value="Aminotrans_3_PPA_site"/>
</dbReference>
<dbReference type="InterPro" id="IPR050103">
    <property type="entry name" value="Class-III_PLP-dep_AT"/>
</dbReference>
<dbReference type="InterPro" id="IPR037537">
    <property type="entry name" value="LysJ"/>
</dbReference>
<dbReference type="InterPro" id="IPR015424">
    <property type="entry name" value="PyrdxlP-dep_Trfase"/>
</dbReference>
<dbReference type="InterPro" id="IPR015421">
    <property type="entry name" value="PyrdxlP-dep_Trfase_major"/>
</dbReference>
<dbReference type="InterPro" id="IPR015422">
    <property type="entry name" value="PyrdxlP-dep_Trfase_small"/>
</dbReference>
<dbReference type="NCBIfam" id="TIGR00707">
    <property type="entry name" value="argD"/>
    <property type="match status" value="1"/>
</dbReference>
<dbReference type="NCBIfam" id="NF003087">
    <property type="entry name" value="PRK04013.1"/>
    <property type="match status" value="1"/>
</dbReference>
<dbReference type="PANTHER" id="PTHR11986:SF79">
    <property type="entry name" value="ACETYLORNITHINE AMINOTRANSFERASE, MITOCHONDRIAL"/>
    <property type="match status" value="1"/>
</dbReference>
<dbReference type="PANTHER" id="PTHR11986">
    <property type="entry name" value="AMINOTRANSFERASE CLASS III"/>
    <property type="match status" value="1"/>
</dbReference>
<dbReference type="Pfam" id="PF00202">
    <property type="entry name" value="Aminotran_3"/>
    <property type="match status" value="1"/>
</dbReference>
<dbReference type="PIRSF" id="PIRSF000521">
    <property type="entry name" value="Transaminase_4ab_Lys_Orn"/>
    <property type="match status" value="1"/>
</dbReference>
<dbReference type="SUPFAM" id="SSF53383">
    <property type="entry name" value="PLP-dependent transferases"/>
    <property type="match status" value="1"/>
</dbReference>
<dbReference type="PROSITE" id="PS00600">
    <property type="entry name" value="AA_TRANSFER_CLASS_3"/>
    <property type="match status" value="1"/>
</dbReference>
<sequence length="366" mass="40745">MSLYRKRLKIIKGEGIYVWDDQGRRYVDLIAGIGVAILGHNHPEWVEGIREQLNKLVIAGPMFNHEEKEEMLEELSKFVNFEYLYMGNSGTEAVEAALKFARLYTGRKEIIAMVNAFHGRTMGALSATWKPKYKKDFEPLVPGFKHIPFNDVEAAKEAISKETAAVIVEPIQGESGVIPAKKEFMKALRDLTEDVGALLIVDEVQTGLRTGKFLAVEHYKIEPDIVTMGKGIGNGIPVGLTLTNFDVERGKHGSTFGGNPLACKAVAITLRILRKERLIEKAKNKFIQIDADEVVTTRGKGLMIGIVFKTTIGKYVEELQNRGYLVHTAGQRVMRLLPPLIISKETMQDVKLAIEGVINDLRGGEN</sequence>
<evidence type="ECO:0000255" key="1">
    <source>
        <dbReference type="HAMAP-Rule" id="MF_02084"/>
    </source>
</evidence>
<name>LYSJ_PYRHO</name>
<accession>O59401</accession>
<keyword id="KW-0028">Amino-acid biosynthesis</keyword>
<keyword id="KW-0032">Aminotransferase</keyword>
<keyword id="KW-0055">Arginine biosynthesis</keyword>
<keyword id="KW-0963">Cytoplasm</keyword>
<keyword id="KW-0457">Lysine biosynthesis</keyword>
<keyword id="KW-0663">Pyridoxal phosphate</keyword>
<keyword id="KW-0808">Transferase</keyword>
<organism>
    <name type="scientific">Pyrococcus horikoshii (strain ATCC 700860 / DSM 12428 / JCM 9974 / NBRC 100139 / OT-3)</name>
    <dbReference type="NCBI Taxonomy" id="70601"/>
    <lineage>
        <taxon>Archaea</taxon>
        <taxon>Methanobacteriati</taxon>
        <taxon>Methanobacteriota</taxon>
        <taxon>Thermococci</taxon>
        <taxon>Thermococcales</taxon>
        <taxon>Thermococcaceae</taxon>
        <taxon>Pyrococcus</taxon>
    </lineage>
</organism>